<proteinExistence type="inferred from homology"/>
<sequence>MNKAVVVFSGGQDSTTCLVKALNEFDEVHAITFDYGQRHRLEIEVAQNLAKELGVAAHKVMDVTLLNELAISSLTRDDIPVSHELQENGLPNSFVPGRNILFLTLAGIYAYQIGAETIITGVCETDFSGYPDCRDDFVKAMNSALVKGMDKPLVIQTPLMWLNKAETWALADQNNALQLVREKTLTCYNGIVGDGCGDCPSCHLRKVGLNDYLDNREAIMASLVEKQHAESK</sequence>
<name>QUEC_VIBVY</name>
<dbReference type="EC" id="6.3.4.20" evidence="1"/>
<dbReference type="EMBL" id="BA000037">
    <property type="protein sequence ID" value="BAC94305.1"/>
    <property type="molecule type" value="Genomic_DNA"/>
</dbReference>
<dbReference type="RefSeq" id="WP_011150168.1">
    <property type="nucleotide sequence ID" value="NC_005139.1"/>
</dbReference>
<dbReference type="SMR" id="Q7ML86"/>
<dbReference type="STRING" id="672.VV93_v1c14470"/>
<dbReference type="KEGG" id="vvy:VV1541"/>
<dbReference type="PATRIC" id="fig|196600.6.peg.1524"/>
<dbReference type="eggNOG" id="COG0603">
    <property type="taxonomic scope" value="Bacteria"/>
</dbReference>
<dbReference type="HOGENOM" id="CLU_081854_0_0_6"/>
<dbReference type="UniPathway" id="UPA00391"/>
<dbReference type="Proteomes" id="UP000002675">
    <property type="component" value="Chromosome I"/>
</dbReference>
<dbReference type="GO" id="GO:0005524">
    <property type="term" value="F:ATP binding"/>
    <property type="evidence" value="ECO:0007669"/>
    <property type="project" value="UniProtKB-UniRule"/>
</dbReference>
<dbReference type="GO" id="GO:0016879">
    <property type="term" value="F:ligase activity, forming carbon-nitrogen bonds"/>
    <property type="evidence" value="ECO:0007669"/>
    <property type="project" value="UniProtKB-UniRule"/>
</dbReference>
<dbReference type="GO" id="GO:0008270">
    <property type="term" value="F:zinc ion binding"/>
    <property type="evidence" value="ECO:0007669"/>
    <property type="project" value="UniProtKB-UniRule"/>
</dbReference>
<dbReference type="GO" id="GO:0008616">
    <property type="term" value="P:queuosine biosynthetic process"/>
    <property type="evidence" value="ECO:0007669"/>
    <property type="project" value="UniProtKB-UniRule"/>
</dbReference>
<dbReference type="CDD" id="cd01995">
    <property type="entry name" value="QueC-like"/>
    <property type="match status" value="1"/>
</dbReference>
<dbReference type="FunFam" id="3.40.50.620:FF:000017">
    <property type="entry name" value="7-cyano-7-deazaguanine synthase"/>
    <property type="match status" value="1"/>
</dbReference>
<dbReference type="Gene3D" id="3.40.50.620">
    <property type="entry name" value="HUPs"/>
    <property type="match status" value="1"/>
</dbReference>
<dbReference type="HAMAP" id="MF_01633">
    <property type="entry name" value="QueC"/>
    <property type="match status" value="1"/>
</dbReference>
<dbReference type="InterPro" id="IPR018317">
    <property type="entry name" value="QueC"/>
</dbReference>
<dbReference type="InterPro" id="IPR014729">
    <property type="entry name" value="Rossmann-like_a/b/a_fold"/>
</dbReference>
<dbReference type="NCBIfam" id="TIGR00364">
    <property type="entry name" value="7-cyano-7-deazaguanine synthase QueC"/>
    <property type="match status" value="1"/>
</dbReference>
<dbReference type="NCBIfam" id="NF008317">
    <property type="entry name" value="PRK11106.1"/>
    <property type="match status" value="1"/>
</dbReference>
<dbReference type="PANTHER" id="PTHR42914">
    <property type="entry name" value="7-CYANO-7-DEAZAGUANINE SYNTHASE"/>
    <property type="match status" value="1"/>
</dbReference>
<dbReference type="PANTHER" id="PTHR42914:SF1">
    <property type="entry name" value="7-CYANO-7-DEAZAGUANINE SYNTHASE"/>
    <property type="match status" value="1"/>
</dbReference>
<dbReference type="Pfam" id="PF06508">
    <property type="entry name" value="QueC"/>
    <property type="match status" value="1"/>
</dbReference>
<dbReference type="PIRSF" id="PIRSF006293">
    <property type="entry name" value="ExsB"/>
    <property type="match status" value="1"/>
</dbReference>
<dbReference type="SUPFAM" id="SSF52402">
    <property type="entry name" value="Adenine nucleotide alpha hydrolases-like"/>
    <property type="match status" value="1"/>
</dbReference>
<organism>
    <name type="scientific">Vibrio vulnificus (strain YJ016)</name>
    <dbReference type="NCBI Taxonomy" id="196600"/>
    <lineage>
        <taxon>Bacteria</taxon>
        <taxon>Pseudomonadati</taxon>
        <taxon>Pseudomonadota</taxon>
        <taxon>Gammaproteobacteria</taxon>
        <taxon>Vibrionales</taxon>
        <taxon>Vibrionaceae</taxon>
        <taxon>Vibrio</taxon>
    </lineage>
</organism>
<protein>
    <recommendedName>
        <fullName evidence="1">7-cyano-7-deazaguanine synthase</fullName>
        <ecNumber evidence="1">6.3.4.20</ecNumber>
    </recommendedName>
    <alternativeName>
        <fullName evidence="1">7-cyano-7-carbaguanine synthase</fullName>
    </alternativeName>
    <alternativeName>
        <fullName evidence="1">PreQ(0) synthase</fullName>
    </alternativeName>
    <alternativeName>
        <fullName evidence="1">Queuosine biosynthesis protein QueC</fullName>
    </alternativeName>
</protein>
<reference key="1">
    <citation type="journal article" date="2003" name="Genome Res.">
        <title>Comparative genome analysis of Vibrio vulnificus, a marine pathogen.</title>
        <authorList>
            <person name="Chen C.-Y."/>
            <person name="Wu K.-M."/>
            <person name="Chang Y.-C."/>
            <person name="Chang C.-H."/>
            <person name="Tsai H.-C."/>
            <person name="Liao T.-L."/>
            <person name="Liu Y.-M."/>
            <person name="Chen H.-J."/>
            <person name="Shen A.B.-T."/>
            <person name="Li J.-C."/>
            <person name="Su T.-L."/>
            <person name="Shao C.-P."/>
            <person name="Lee C.-T."/>
            <person name="Hor L.-I."/>
            <person name="Tsai S.-F."/>
        </authorList>
    </citation>
    <scope>NUCLEOTIDE SEQUENCE [LARGE SCALE GENOMIC DNA]</scope>
    <source>
        <strain>YJ016</strain>
    </source>
</reference>
<evidence type="ECO:0000255" key="1">
    <source>
        <dbReference type="HAMAP-Rule" id="MF_01633"/>
    </source>
</evidence>
<feature type="chain" id="PRO_0000246959" description="7-cyano-7-deazaguanine synthase">
    <location>
        <begin position="1"/>
        <end position="232"/>
    </location>
</feature>
<feature type="binding site" evidence="1">
    <location>
        <begin position="8"/>
        <end position="18"/>
    </location>
    <ligand>
        <name>ATP</name>
        <dbReference type="ChEBI" id="CHEBI:30616"/>
    </ligand>
</feature>
<feature type="binding site" evidence="1">
    <location>
        <position position="187"/>
    </location>
    <ligand>
        <name>Zn(2+)</name>
        <dbReference type="ChEBI" id="CHEBI:29105"/>
    </ligand>
</feature>
<feature type="binding site" evidence="1">
    <location>
        <position position="196"/>
    </location>
    <ligand>
        <name>Zn(2+)</name>
        <dbReference type="ChEBI" id="CHEBI:29105"/>
    </ligand>
</feature>
<feature type="binding site" evidence="1">
    <location>
        <position position="199"/>
    </location>
    <ligand>
        <name>Zn(2+)</name>
        <dbReference type="ChEBI" id="CHEBI:29105"/>
    </ligand>
</feature>
<feature type="binding site" evidence="1">
    <location>
        <position position="202"/>
    </location>
    <ligand>
        <name>Zn(2+)</name>
        <dbReference type="ChEBI" id="CHEBI:29105"/>
    </ligand>
</feature>
<accession>Q7ML86</accession>
<keyword id="KW-0067">ATP-binding</keyword>
<keyword id="KW-0436">Ligase</keyword>
<keyword id="KW-0479">Metal-binding</keyword>
<keyword id="KW-0547">Nucleotide-binding</keyword>
<keyword id="KW-0671">Queuosine biosynthesis</keyword>
<keyword id="KW-0862">Zinc</keyword>
<gene>
    <name evidence="1" type="primary">queC</name>
    <name type="ordered locus">VV1541</name>
</gene>
<comment type="function">
    <text evidence="1">Catalyzes the ATP-dependent conversion of 7-carboxy-7-deazaguanine (CDG) to 7-cyano-7-deazaguanine (preQ(0)).</text>
</comment>
<comment type="catalytic activity">
    <reaction evidence="1">
        <text>7-carboxy-7-deazaguanine + NH4(+) + ATP = 7-cyano-7-deazaguanine + ADP + phosphate + H2O + H(+)</text>
        <dbReference type="Rhea" id="RHEA:27982"/>
        <dbReference type="ChEBI" id="CHEBI:15377"/>
        <dbReference type="ChEBI" id="CHEBI:15378"/>
        <dbReference type="ChEBI" id="CHEBI:28938"/>
        <dbReference type="ChEBI" id="CHEBI:30616"/>
        <dbReference type="ChEBI" id="CHEBI:43474"/>
        <dbReference type="ChEBI" id="CHEBI:45075"/>
        <dbReference type="ChEBI" id="CHEBI:61036"/>
        <dbReference type="ChEBI" id="CHEBI:456216"/>
        <dbReference type="EC" id="6.3.4.20"/>
    </reaction>
</comment>
<comment type="cofactor">
    <cofactor evidence="1">
        <name>Zn(2+)</name>
        <dbReference type="ChEBI" id="CHEBI:29105"/>
    </cofactor>
    <text evidence="1">Binds 1 zinc ion per subunit.</text>
</comment>
<comment type="pathway">
    <text evidence="1">Purine metabolism; 7-cyano-7-deazaguanine biosynthesis.</text>
</comment>
<comment type="similarity">
    <text evidence="1">Belongs to the QueC family.</text>
</comment>